<comment type="function">
    <text evidence="2 3">Acts as a ligand for C-C chemokine receptor CCR2 (By similarity). Signals through binding and activation of CCR2 and induces a strong chemotactic response and mobilization of intracellular calcium ions (By similarity). Exhibits a chemotactic activity for monocytes and basophils but not neutrophils or eosinophils (By similarity). Plays an important role in mediating peripheral nerve injury-induced neuropathic pain (By similarity). Increases NMDA-mediated synaptic transmission in both dopamine D1 and D2 receptor-containing neurons, which may be caused by MAPK/ERK-dependent phosphorylation of GRIN2B/NMDAR2B (By similarity).</text>
</comment>
<comment type="subunit">
    <text evidence="3">Monomer or homodimer; in equilibrium. Is tethered on endothelial cells by glycosaminoglycan (GAG) side chains of proteoglycans. Interacts with TNFAIP6 (via Link domain).</text>
</comment>
<comment type="subcellular location">
    <subcellularLocation>
        <location evidence="3">Secreted</location>
    </subcellularLocation>
</comment>
<comment type="PTM">
    <text evidence="3">Processing at the N-terminus can regulate receptor and target cell selectivity (By similarity). Deletion of the N-terminal residue converts it from an activator of basophil to an eosinophil chemoattractant (By similarity).</text>
</comment>
<comment type="PTM">
    <text evidence="3">N-Glycosylated.</text>
</comment>
<comment type="similarity">
    <text evidence="6">Belongs to the intercrine beta (chemokine CC) family.</text>
</comment>
<dbReference type="EMBL" id="L04985">
    <property type="protein sequence ID" value="AAA37047.1"/>
    <property type="molecule type" value="mRNA"/>
</dbReference>
<dbReference type="PIR" id="I48147">
    <property type="entry name" value="I48147"/>
</dbReference>
<dbReference type="RefSeq" id="NP_001166397.1">
    <property type="nucleotide sequence ID" value="NM_001172926.1"/>
</dbReference>
<dbReference type="SMR" id="Q08782"/>
<dbReference type="FunCoup" id="Q08782">
    <property type="interactions" value="563"/>
</dbReference>
<dbReference type="STRING" id="10141.ENSCPOP00000012126"/>
<dbReference type="GlyCosmos" id="Q08782">
    <property type="glycosylation" value="1 site, No reported glycans"/>
</dbReference>
<dbReference type="Ensembl" id="ENSCPOT00000013601.3">
    <property type="protein sequence ID" value="ENSCPOP00000012126.2"/>
    <property type="gene ID" value="ENSCPOG00000013468.4"/>
</dbReference>
<dbReference type="GeneID" id="100135494"/>
<dbReference type="KEGG" id="cpoc:100135494"/>
<dbReference type="CTD" id="6347"/>
<dbReference type="VEuPathDB" id="HostDB:ENSCPOG00000013468"/>
<dbReference type="eggNOG" id="ENOG502S6ZP">
    <property type="taxonomic scope" value="Eukaryota"/>
</dbReference>
<dbReference type="GeneTree" id="ENSGT01130000278316"/>
<dbReference type="HOGENOM" id="CLU_141716_1_0_1"/>
<dbReference type="InParanoid" id="Q08782"/>
<dbReference type="OMA" id="VNTPTCC"/>
<dbReference type="OrthoDB" id="9404618at2759"/>
<dbReference type="TreeFam" id="TF334888"/>
<dbReference type="Proteomes" id="UP000005447">
    <property type="component" value="Unassembled WGS sequence"/>
</dbReference>
<dbReference type="Bgee" id="ENSCPOG00000013468">
    <property type="expression patterns" value="Expressed in zone of skin and 12 other cell types or tissues"/>
</dbReference>
<dbReference type="GO" id="GO:0005615">
    <property type="term" value="C:extracellular space"/>
    <property type="evidence" value="ECO:0007669"/>
    <property type="project" value="UniProtKB-KW"/>
</dbReference>
<dbReference type="GO" id="GO:0048020">
    <property type="term" value="F:CCR chemokine receptor binding"/>
    <property type="evidence" value="ECO:0007669"/>
    <property type="project" value="TreeGrafter"/>
</dbReference>
<dbReference type="GO" id="GO:0008009">
    <property type="term" value="F:chemokine activity"/>
    <property type="evidence" value="ECO:0007669"/>
    <property type="project" value="InterPro"/>
</dbReference>
<dbReference type="GO" id="GO:0061844">
    <property type="term" value="P:antimicrobial humoral immune response mediated by antimicrobial peptide"/>
    <property type="evidence" value="ECO:0007669"/>
    <property type="project" value="TreeGrafter"/>
</dbReference>
<dbReference type="GO" id="GO:0070098">
    <property type="term" value="P:chemokine-mediated signaling pathway"/>
    <property type="evidence" value="ECO:0007669"/>
    <property type="project" value="TreeGrafter"/>
</dbReference>
<dbReference type="GO" id="GO:0048245">
    <property type="term" value="P:eosinophil chemotaxis"/>
    <property type="evidence" value="ECO:0007669"/>
    <property type="project" value="TreeGrafter"/>
</dbReference>
<dbReference type="GO" id="GO:0006954">
    <property type="term" value="P:inflammatory response"/>
    <property type="evidence" value="ECO:0007669"/>
    <property type="project" value="UniProtKB-KW"/>
</dbReference>
<dbReference type="GO" id="GO:0030335">
    <property type="term" value="P:positive regulation of cell migration"/>
    <property type="evidence" value="ECO:0007669"/>
    <property type="project" value="TreeGrafter"/>
</dbReference>
<dbReference type="GO" id="GO:0051968">
    <property type="term" value="P:positive regulation of synaptic transmission, glutamatergic"/>
    <property type="evidence" value="ECO:0000250"/>
    <property type="project" value="UniProtKB"/>
</dbReference>
<dbReference type="GO" id="GO:0019233">
    <property type="term" value="P:sensory perception of pain"/>
    <property type="evidence" value="ECO:0000250"/>
    <property type="project" value="UniProtKB"/>
</dbReference>
<dbReference type="CDD" id="cd00272">
    <property type="entry name" value="Chemokine_CC"/>
    <property type="match status" value="1"/>
</dbReference>
<dbReference type="FunFam" id="2.40.50.40:FF:000002">
    <property type="entry name" value="C-C motif chemokine"/>
    <property type="match status" value="1"/>
</dbReference>
<dbReference type="Gene3D" id="2.40.50.40">
    <property type="match status" value="1"/>
</dbReference>
<dbReference type="InterPro" id="IPR039809">
    <property type="entry name" value="Chemokine_b/g/d"/>
</dbReference>
<dbReference type="InterPro" id="IPR000827">
    <property type="entry name" value="Chemokine_CC_CS"/>
</dbReference>
<dbReference type="InterPro" id="IPR001811">
    <property type="entry name" value="Chemokine_IL8-like_dom"/>
</dbReference>
<dbReference type="InterPro" id="IPR036048">
    <property type="entry name" value="Interleukin_8-like_sf"/>
</dbReference>
<dbReference type="PANTHER" id="PTHR12015:SF209">
    <property type="entry name" value="C-C MOTIF CHEMOKINE 8"/>
    <property type="match status" value="1"/>
</dbReference>
<dbReference type="PANTHER" id="PTHR12015">
    <property type="entry name" value="SMALL INDUCIBLE CYTOKINE A"/>
    <property type="match status" value="1"/>
</dbReference>
<dbReference type="Pfam" id="PF00048">
    <property type="entry name" value="IL8"/>
    <property type="match status" value="1"/>
</dbReference>
<dbReference type="SMART" id="SM00199">
    <property type="entry name" value="SCY"/>
    <property type="match status" value="1"/>
</dbReference>
<dbReference type="SUPFAM" id="SSF54117">
    <property type="entry name" value="Interleukin 8-like chemokines"/>
    <property type="match status" value="1"/>
</dbReference>
<dbReference type="PROSITE" id="PS00472">
    <property type="entry name" value="SMALL_CYTOKINES_CC"/>
    <property type="match status" value="1"/>
</dbReference>
<reference key="1">
    <citation type="journal article" date="1993" name="J. Immunol.">
        <title>cDNA cloning of guinea pig monocyte chemoattractant protein-1 and expression of the recombinant protein.</title>
        <authorList>
            <person name="Yoshimura T."/>
        </authorList>
    </citation>
    <scope>NUCLEOTIDE SEQUENCE [MRNA]</scope>
    <source>
        <strain>Z</strain>
        <tissue>Spleen</tissue>
    </source>
</reference>
<protein>
    <recommendedName>
        <fullName>C-C motif chemokine 2</fullName>
    </recommendedName>
    <alternativeName>
        <fullName>Monocyte chemoattractant protein 1</fullName>
    </alternativeName>
    <alternativeName>
        <fullName>Monocyte chemotactic protein 1</fullName>
        <shortName>MCP-1</shortName>
    </alternativeName>
    <alternativeName>
        <fullName>Small-inducible cytokine A2</fullName>
    </alternativeName>
</protein>
<gene>
    <name type="primary">CCL2</name>
    <name type="synonym">MCP1</name>
    <name type="synonym">SCYA2</name>
</gene>
<sequence length="120" mass="13741">MQRSSVLLCLLVIEATFCSLLMAQPDGVNTPTCCYTFNKQIPLKRVKGYERITSSRCPQEAVIFRTLKNKEVCADPTQKWVQDYIAKLDQRTQQKQNSTAPQTSKPLNIRFTTQDPKNRS</sequence>
<proteinExistence type="evidence at transcript level"/>
<name>CCL2_CAVPO</name>
<keyword id="KW-0145">Chemotaxis</keyword>
<keyword id="KW-0202">Cytokine</keyword>
<keyword id="KW-1015">Disulfide bond</keyword>
<keyword id="KW-0325">Glycoprotein</keyword>
<keyword id="KW-0395">Inflammatory response</keyword>
<keyword id="KW-0873">Pyrrolidone carboxylic acid</keyword>
<keyword id="KW-1185">Reference proteome</keyword>
<keyword id="KW-0964">Secreted</keyword>
<keyword id="KW-0732">Signal</keyword>
<accession>Q08782</accession>
<feature type="signal peptide" evidence="1">
    <location>
        <begin position="1"/>
        <end position="23"/>
    </location>
</feature>
<feature type="chain" id="PRO_0000005144" description="C-C motif chemokine 2">
    <location>
        <begin position="24"/>
        <end position="120"/>
    </location>
</feature>
<feature type="region of interest" description="Disordered" evidence="5">
    <location>
        <begin position="91"/>
        <end position="120"/>
    </location>
</feature>
<feature type="compositionally biased region" description="Polar residues" evidence="5">
    <location>
        <begin position="93"/>
        <end position="120"/>
    </location>
</feature>
<feature type="modified residue" description="Pyrrolidone carboxylic acid" evidence="3">
    <location>
        <position position="24"/>
    </location>
</feature>
<feature type="glycosylation site" description="N-linked (GlcNAc...) asparagine" evidence="4">
    <location>
        <position position="97"/>
    </location>
</feature>
<feature type="disulfide bond" evidence="1">
    <location>
        <begin position="33"/>
        <end position="57"/>
    </location>
</feature>
<feature type="disulfide bond" evidence="1">
    <location>
        <begin position="34"/>
        <end position="73"/>
    </location>
</feature>
<organism>
    <name type="scientific">Cavia porcellus</name>
    <name type="common">Guinea pig</name>
    <dbReference type="NCBI Taxonomy" id="10141"/>
    <lineage>
        <taxon>Eukaryota</taxon>
        <taxon>Metazoa</taxon>
        <taxon>Chordata</taxon>
        <taxon>Craniata</taxon>
        <taxon>Vertebrata</taxon>
        <taxon>Euteleostomi</taxon>
        <taxon>Mammalia</taxon>
        <taxon>Eutheria</taxon>
        <taxon>Euarchontoglires</taxon>
        <taxon>Glires</taxon>
        <taxon>Rodentia</taxon>
        <taxon>Hystricomorpha</taxon>
        <taxon>Caviidae</taxon>
        <taxon>Cavia</taxon>
    </lineage>
</organism>
<evidence type="ECO:0000250" key="1"/>
<evidence type="ECO:0000250" key="2">
    <source>
        <dbReference type="UniProtKB" id="P10148"/>
    </source>
</evidence>
<evidence type="ECO:0000250" key="3">
    <source>
        <dbReference type="UniProtKB" id="P13500"/>
    </source>
</evidence>
<evidence type="ECO:0000255" key="4"/>
<evidence type="ECO:0000256" key="5">
    <source>
        <dbReference type="SAM" id="MobiDB-lite"/>
    </source>
</evidence>
<evidence type="ECO:0000305" key="6"/>